<sequence>MFVDIHTSSKQYKAEVGSGILREAGKTIEALAPASSYLIVSDENVANRYLDVLVSSFSKEPHTFVVKAGEQSKSFHVYEQLAAFCLEKQLDRQSVIIAFGGGVVGDLAGFVAGTYMRGVRFIQVPTTLLAHDSSVGGKVAVNLPAAKNMIGVFHQPEAVLFDTELLATLPEHEWRSGFAEIVKLGFIADASFLAWLRETVPALTSIKADNLQKMVAKAIAIKADIVGKDEKEHGIRAHLNFGHTLAHAIEAELGYGKITHGEAVAIGMRFAFRLSLRFTKEDLRLADYEEWFSALGYDLRLPAGLSAQRLLARMKSDKKTNAGKIVMVLLAQLGAAYTKTVDEHLLLELLEEELGGRS</sequence>
<accession>Q5WGS7</accession>
<reference key="1">
    <citation type="submission" date="2003-10" db="EMBL/GenBank/DDBJ databases">
        <title>The complete genome sequence of the alkaliphilic Bacillus clausii KSM-K16.</title>
        <authorList>
            <person name="Takaki Y."/>
            <person name="Kageyama Y."/>
            <person name="Shimamura S."/>
            <person name="Suzuki H."/>
            <person name="Nishi S."/>
            <person name="Hatada Y."/>
            <person name="Kawai S."/>
            <person name="Ito S."/>
            <person name="Horikoshi K."/>
        </authorList>
    </citation>
    <scope>NUCLEOTIDE SEQUENCE [LARGE SCALE GENOMIC DNA]</scope>
    <source>
        <strain>KSM-K16</strain>
    </source>
</reference>
<evidence type="ECO:0000255" key="1">
    <source>
        <dbReference type="HAMAP-Rule" id="MF_00110"/>
    </source>
</evidence>
<organism>
    <name type="scientific">Shouchella clausii (strain KSM-K16)</name>
    <name type="common">Alkalihalobacillus clausii</name>
    <dbReference type="NCBI Taxonomy" id="66692"/>
    <lineage>
        <taxon>Bacteria</taxon>
        <taxon>Bacillati</taxon>
        <taxon>Bacillota</taxon>
        <taxon>Bacilli</taxon>
        <taxon>Bacillales</taxon>
        <taxon>Bacillaceae</taxon>
        <taxon>Shouchella</taxon>
    </lineage>
</organism>
<dbReference type="EC" id="4.2.3.4" evidence="1"/>
<dbReference type="EMBL" id="AP006627">
    <property type="protein sequence ID" value="BAD64428.1"/>
    <property type="molecule type" value="Genomic_DNA"/>
</dbReference>
<dbReference type="RefSeq" id="WP_011246736.1">
    <property type="nucleotide sequence ID" value="NC_006582.1"/>
</dbReference>
<dbReference type="SMR" id="Q5WGS7"/>
<dbReference type="STRING" id="66692.ABC1893"/>
<dbReference type="KEGG" id="bcl:ABC1893"/>
<dbReference type="eggNOG" id="COG0337">
    <property type="taxonomic scope" value="Bacteria"/>
</dbReference>
<dbReference type="HOGENOM" id="CLU_001201_0_2_9"/>
<dbReference type="OrthoDB" id="9806583at2"/>
<dbReference type="UniPathway" id="UPA00053">
    <property type="reaction ID" value="UER00085"/>
</dbReference>
<dbReference type="Proteomes" id="UP000001168">
    <property type="component" value="Chromosome"/>
</dbReference>
<dbReference type="GO" id="GO:0005737">
    <property type="term" value="C:cytoplasm"/>
    <property type="evidence" value="ECO:0007669"/>
    <property type="project" value="UniProtKB-SubCell"/>
</dbReference>
<dbReference type="GO" id="GO:0003856">
    <property type="term" value="F:3-dehydroquinate synthase activity"/>
    <property type="evidence" value="ECO:0007669"/>
    <property type="project" value="UniProtKB-UniRule"/>
</dbReference>
<dbReference type="GO" id="GO:0046872">
    <property type="term" value="F:metal ion binding"/>
    <property type="evidence" value="ECO:0007669"/>
    <property type="project" value="UniProtKB-KW"/>
</dbReference>
<dbReference type="GO" id="GO:0000166">
    <property type="term" value="F:nucleotide binding"/>
    <property type="evidence" value="ECO:0007669"/>
    <property type="project" value="UniProtKB-KW"/>
</dbReference>
<dbReference type="GO" id="GO:0008652">
    <property type="term" value="P:amino acid biosynthetic process"/>
    <property type="evidence" value="ECO:0007669"/>
    <property type="project" value="UniProtKB-KW"/>
</dbReference>
<dbReference type="GO" id="GO:0009073">
    <property type="term" value="P:aromatic amino acid family biosynthetic process"/>
    <property type="evidence" value="ECO:0007669"/>
    <property type="project" value="UniProtKB-KW"/>
</dbReference>
<dbReference type="GO" id="GO:0009423">
    <property type="term" value="P:chorismate biosynthetic process"/>
    <property type="evidence" value="ECO:0007669"/>
    <property type="project" value="UniProtKB-UniRule"/>
</dbReference>
<dbReference type="CDD" id="cd08195">
    <property type="entry name" value="DHQS"/>
    <property type="match status" value="1"/>
</dbReference>
<dbReference type="FunFam" id="3.40.50.1970:FF:000007">
    <property type="entry name" value="Pentafunctional AROM polypeptide"/>
    <property type="match status" value="1"/>
</dbReference>
<dbReference type="Gene3D" id="3.40.50.1970">
    <property type="match status" value="1"/>
</dbReference>
<dbReference type="Gene3D" id="1.20.1090.10">
    <property type="entry name" value="Dehydroquinate synthase-like - alpha domain"/>
    <property type="match status" value="1"/>
</dbReference>
<dbReference type="HAMAP" id="MF_00110">
    <property type="entry name" value="DHQ_synthase"/>
    <property type="match status" value="1"/>
</dbReference>
<dbReference type="InterPro" id="IPR050071">
    <property type="entry name" value="Dehydroquinate_synthase"/>
</dbReference>
<dbReference type="InterPro" id="IPR016037">
    <property type="entry name" value="DHQ_synth_AroB"/>
</dbReference>
<dbReference type="InterPro" id="IPR030963">
    <property type="entry name" value="DHQ_synth_fam"/>
</dbReference>
<dbReference type="InterPro" id="IPR030960">
    <property type="entry name" value="DHQS/DOIS_N"/>
</dbReference>
<dbReference type="InterPro" id="IPR056179">
    <property type="entry name" value="DHQS_C"/>
</dbReference>
<dbReference type="NCBIfam" id="TIGR01357">
    <property type="entry name" value="aroB"/>
    <property type="match status" value="1"/>
</dbReference>
<dbReference type="PANTHER" id="PTHR43622">
    <property type="entry name" value="3-DEHYDROQUINATE SYNTHASE"/>
    <property type="match status" value="1"/>
</dbReference>
<dbReference type="PANTHER" id="PTHR43622:SF7">
    <property type="entry name" value="3-DEHYDROQUINATE SYNTHASE, CHLOROPLASTIC"/>
    <property type="match status" value="1"/>
</dbReference>
<dbReference type="Pfam" id="PF01761">
    <property type="entry name" value="DHQ_synthase"/>
    <property type="match status" value="1"/>
</dbReference>
<dbReference type="Pfam" id="PF24621">
    <property type="entry name" value="DHQS_C"/>
    <property type="match status" value="1"/>
</dbReference>
<dbReference type="PIRSF" id="PIRSF001455">
    <property type="entry name" value="DHQ_synth"/>
    <property type="match status" value="1"/>
</dbReference>
<dbReference type="SUPFAM" id="SSF56796">
    <property type="entry name" value="Dehydroquinate synthase-like"/>
    <property type="match status" value="1"/>
</dbReference>
<keyword id="KW-0028">Amino-acid biosynthesis</keyword>
<keyword id="KW-0057">Aromatic amino acid biosynthesis</keyword>
<keyword id="KW-0170">Cobalt</keyword>
<keyword id="KW-0963">Cytoplasm</keyword>
<keyword id="KW-0456">Lyase</keyword>
<keyword id="KW-0479">Metal-binding</keyword>
<keyword id="KW-0520">NAD</keyword>
<keyword id="KW-0547">Nucleotide-binding</keyword>
<keyword id="KW-1185">Reference proteome</keyword>
<keyword id="KW-0862">Zinc</keyword>
<comment type="function">
    <text evidence="1">Catalyzes the conversion of 3-deoxy-D-arabino-heptulosonate 7-phosphate (DAHP) to dehydroquinate (DHQ).</text>
</comment>
<comment type="catalytic activity">
    <reaction evidence="1">
        <text>7-phospho-2-dehydro-3-deoxy-D-arabino-heptonate = 3-dehydroquinate + phosphate</text>
        <dbReference type="Rhea" id="RHEA:21968"/>
        <dbReference type="ChEBI" id="CHEBI:32364"/>
        <dbReference type="ChEBI" id="CHEBI:43474"/>
        <dbReference type="ChEBI" id="CHEBI:58394"/>
        <dbReference type="EC" id="4.2.3.4"/>
    </reaction>
</comment>
<comment type="cofactor">
    <cofactor evidence="1">
        <name>Co(2+)</name>
        <dbReference type="ChEBI" id="CHEBI:48828"/>
    </cofactor>
    <cofactor evidence="1">
        <name>Zn(2+)</name>
        <dbReference type="ChEBI" id="CHEBI:29105"/>
    </cofactor>
    <text evidence="1">Binds 1 divalent metal cation per subunit. Can use either Co(2+) or Zn(2+).</text>
</comment>
<comment type="cofactor">
    <cofactor evidence="1">
        <name>NAD(+)</name>
        <dbReference type="ChEBI" id="CHEBI:57540"/>
    </cofactor>
</comment>
<comment type="pathway">
    <text evidence="1">Metabolic intermediate biosynthesis; chorismate biosynthesis; chorismate from D-erythrose 4-phosphate and phosphoenolpyruvate: step 2/7.</text>
</comment>
<comment type="subcellular location">
    <subcellularLocation>
        <location evidence="1">Cytoplasm</location>
    </subcellularLocation>
</comment>
<comment type="similarity">
    <text evidence="1">Belongs to the sugar phosphate cyclases superfamily. Dehydroquinate synthase family.</text>
</comment>
<gene>
    <name evidence="1" type="primary">aroB</name>
    <name type="ordered locus">ABC1893</name>
</gene>
<feature type="chain" id="PRO_0000231065" description="3-dehydroquinate synthase">
    <location>
        <begin position="1"/>
        <end position="358"/>
    </location>
</feature>
<feature type="binding site" evidence="1">
    <location>
        <begin position="102"/>
        <end position="106"/>
    </location>
    <ligand>
        <name>NAD(+)</name>
        <dbReference type="ChEBI" id="CHEBI:57540"/>
    </ligand>
</feature>
<feature type="binding site" evidence="1">
    <location>
        <begin position="126"/>
        <end position="127"/>
    </location>
    <ligand>
        <name>NAD(+)</name>
        <dbReference type="ChEBI" id="CHEBI:57540"/>
    </ligand>
</feature>
<feature type="binding site" evidence="1">
    <location>
        <position position="138"/>
    </location>
    <ligand>
        <name>NAD(+)</name>
        <dbReference type="ChEBI" id="CHEBI:57540"/>
    </ligand>
</feature>
<feature type="binding site" evidence="1">
    <location>
        <position position="147"/>
    </location>
    <ligand>
        <name>NAD(+)</name>
        <dbReference type="ChEBI" id="CHEBI:57540"/>
    </ligand>
</feature>
<feature type="binding site" evidence="1">
    <location>
        <position position="180"/>
    </location>
    <ligand>
        <name>Zn(2+)</name>
        <dbReference type="ChEBI" id="CHEBI:29105"/>
    </ligand>
</feature>
<feature type="binding site" evidence="1">
    <location>
        <position position="243"/>
    </location>
    <ligand>
        <name>Zn(2+)</name>
        <dbReference type="ChEBI" id="CHEBI:29105"/>
    </ligand>
</feature>
<feature type="binding site" evidence="1">
    <location>
        <position position="260"/>
    </location>
    <ligand>
        <name>Zn(2+)</name>
        <dbReference type="ChEBI" id="CHEBI:29105"/>
    </ligand>
</feature>
<proteinExistence type="inferred from homology"/>
<name>AROB_SHOC1</name>
<protein>
    <recommendedName>
        <fullName evidence="1">3-dehydroquinate synthase</fullName>
        <shortName evidence="1">DHQS</shortName>
        <ecNumber evidence="1">4.2.3.4</ecNumber>
    </recommendedName>
</protein>